<keyword id="KW-0002">3D-structure</keyword>
<keyword id="KW-0045">Antibiotic biosynthesis</keyword>
<keyword id="KW-0436">Ligase</keyword>
<keyword id="KW-0511">Multifunctional enzyme</keyword>
<keyword id="KW-0596">Phosphopantetheine</keyword>
<keyword id="KW-0597">Phosphoprotein</keyword>
<keyword id="KW-0677">Repeat</keyword>
<reference key="1">
    <citation type="journal article" date="1997" name="J. Bacteriol.">
        <title>The tyrocidine biosynthesis operon of Bacillus brevis: complete nucleotide sequence and biochemical characterization of functional internal adenylation domains.</title>
        <authorList>
            <person name="Mootz H.D."/>
            <person name="Marahiel M.A."/>
        </authorList>
    </citation>
    <scope>NUCLEOTIDE SEQUENCE [GENOMIC DNA]</scope>
    <source>
        <strain>ATCC 8185 / DSM 362 / JCM 20017 / IAM 1031 / NBRC 3331 / NCDO 717 / NCIMB 8598 / NRS 751 / BG</strain>
    </source>
</reference>
<reference key="2">
    <citation type="journal article" date="2000" name="Structure">
        <title>Solution structure of PCP, a prototype for the peptidyl carrier domains of modular peptide synthetases.</title>
        <authorList>
            <person name="Weber T."/>
            <person name="Baumgartner R."/>
            <person name="Renner C."/>
            <person name="Marahiel M.A."/>
            <person name="Holak T.A."/>
        </authorList>
    </citation>
    <scope>STRUCTURE BY NMR OF 3032-3113</scope>
    <scope>PHOSPHOPANTETHEINYLATION AT SER-3075</scope>
</reference>
<proteinExistence type="evidence at protein level"/>
<comment type="function">
    <text>Incorporates six amino acids (for tyrocidine A, Asn, Gln, Tyr, Val, Orn, and Leu) in their L-configuration into the peptide product.</text>
</comment>
<comment type="cofactor">
    <cofactor evidence="1">
        <name>pantetheine 4'-phosphate</name>
        <dbReference type="ChEBI" id="CHEBI:47942"/>
    </cofactor>
    <text evidence="1">Binds 6 phosphopantetheines covalently.</text>
</comment>
<comment type="pathway">
    <text>Antibiotic biosynthesis; tyrocidine biosynthesis.</text>
</comment>
<comment type="subunit">
    <text>Large multienzyme complex of TycA, TycB and TycC.</text>
</comment>
<comment type="domain">
    <text>Consists of six modules, and harbors a putative thioesterase domain at its C-terminal end. Each module incorporates one amino acid into the peptide product and can be further subdivided into domains responsible for substrate adenylation, thiolation, condensation (not for the initiation module), and epimerization (optional), and N methylation (optional).</text>
</comment>
<comment type="miscellaneous">
    <text>Tyrocidine is a mixture of four cyclic decapeptides, tyrocidine A (D-Phe-Pro-Phe-D-Phe-Asn-Gln-Tyr-Val-Orn-Leu), B, C, and D, in which Phe, at positions 3, 4, and Tyr residues are gradually replaced by Trp, depending on the relative concentrations of these amino acids in the growth medium.</text>
</comment>
<comment type="similarity">
    <text evidence="4">Belongs to the ATP-dependent AMP-binding enzyme family.</text>
</comment>
<sequence length="6486" mass="724033">MKKQENIAKIYPLTPLQEGMLFHAVTDTGSSAYCLQMSATIEGDFHLPLFEKSLNKLVENYEVLRTAFVYQNMQRPRQVVFKERKVTVPCENIAHLPSAEQDAYIQAYTKQHHAFDLTKDNLMKAAIFQTAENKYRLVWAFHHIIVDGWTLGVLLHKLLTYYAALRKGEPIPREATKPYSEYIKWLDKQNKDEALAYWQNYLAGYDHQAAFPKKKLGTEASRYEHVEAMFTIAPEKTQQLIQIANQNQATMSSVFQALWGILASTYKNADDVVFGSVVSGRPPQIQGIESMVGLFINTIPTRVQTNKQQTFSELLQTVQKQALASATYDFAPLYEIQSTTVLKQELIDHLVTFENYPDHSMKHLEESLGFQFTVESGDEQTSYDLNVVVALAPSNELYVKLSYNAAVYESSFVNRIEGHLRTVIDQVIGNPHVHLHEIGIITEEEKQQLLVAYNDTAAEYPRDKTIFELIAEQASRTPAKAAVVCGEDTLTYQELMERSAQLANALREKGIASGSIVSIMAEHSLELIVAIMAVLRSGAAYLPIDPEYPQDRIQYLLDDSQTTLLLTQSHLQPNIRFAGSVLYLDDRSLYEGGSTSFAPESKPDDLAYMIYTSGSTGNPKGAMITHQGLVNYIWWANKVYVQGEAVDFPLYSSISFDLTVTSIFTPLLSGNTIHVYRGADKVQVILDIIKDNKVGIIKLTPTHLKLIEHIDGKASSIRRFIVGGENLPTKLAKQIYDHFGENVQIFNEYGPTETVVGCMIYLYDPQTTTQESVPIGVPADNVQLYLLDASMQPVPVGSLGEMYIAGDGVAKGYFNRPELTKEKFIDNPFRPGTKMYRTGDLAKWLPDGNMEYAGRMDYQVKIRGHRIEMGEIETRLTQHEAVKEAVVIVEKDESGQNVLYAYLVSERELTVAELREFLGRTLPSYMIPSFFIRLAEIPLTANGKVERKKLPKPAGAVVTGTAYAAPQNEIEAKLAEIWQQVLGISQVGIHDDFFDLGGHSLKAMTVVFQVSKALEVELPVKALFEHPTVAELARFLSRSEKTEYTAIQPVAAQEFYPVSSAQKRMYILQQFEGNGISYNISGAILLEGKLDYARFASAVQQLAERHEALRTSFHRIDGEPVQKVHEEVEVPLFMLEAPEDQAEKIMREFVRPFDLGVAPLMRTGLLKLGKDRHLFLLDMHHIISDGVSSQILLREFAELYQGADLQPLSLQYKDFAAWQNELFQTEAYKKQEQHWLNTFADEIPLLNLPTDYPRPSVQSFAGDLVLFAAGKELLERLQQVASETGTTLYMILLAAYNVLLSKYTGQEDIIVGTPVAGRSHADVENIMGIFVNTLALRNQPASSKTFAQFLQEVKQNALAAYDHQDYPFEELVEKLAIQRDISRNPLFDTLFSLENANQQSLAIAELTASPYELFNKISKFDLALNASESPADIQFQLTFATKLFKKETVERMARHYLEILRWISEQPTASLADIDMMTEAEKRTLLLNVNDTFVERTAATALHQLVEEQAARTPDEVAVVYEEYALTYRELNARANQLARLLRSHGTGPDTLIGIMVDRSPGMVVGMLAVLKAGGAYTPIDPSYPPERIQYMLSDSQAPILLTQRHLQELAAYQGEIIDVDEEAIYTGADTNLDNVAGKDDLAYVIYTSGSTGNPKGVMISHQAICNHMLWMRETFPLTTEDAVLQKTPFSFDASVWEFYLPLITGGQLVLAKPDGHRDIAYMTRLIRDEKITTLQMVPSLLDLVMTDPGWSACTSLQRVFCGGEALTPALVSRFYETQQAQLINLYGPTETTIDATYWPCPRQQEYSAIPIGKPIDNVRLYVVNASNQLQPVGVAGELCIAGDGLARGYWQREELTKASFVDNPFEPGGTMYRTGDMVRYLPDGHIEYLGRIDHQVKIRGHRIELGEIEATLLQHEAVKAVVVMARQDGKGQNSLYAYVVAEQDIQTAELRTYLSATLPAYMVPSAFVFLEQLPLSANGKVDRKALPQPEDAAASAAVYVAPRNEWEAKLAAIWESVLGVEPIGVHDHFFELGGHSLKAMHVISLLQRSFQVDVPLKVLFESPTIAGLAPLVAAARKGTYTAIPPVEKQEYYPVSAAQKRMFILQQMEGAGISYNMPGFMYLDGKLDTERLQQALKSLVQRHESLRTSFHSVQGETVQRVHDDVDLAISFGEATEAETRQIAEQFIQPFDLGTAPLLRAGLIKLAPERHLFMLDLHHIVVDGVSIGLLIEEFAQLYHGEELPALRIQYKDFAKWQQDWFQTEEFAEQEAYWLNTFTGEIPVLNLPTDYPRPSVKSFAGDRFVFGSGTALPKQLHQLAQETGTTLYMVLLAAYNVLLSKYSRQEDIIVGAPTAGRSHAETESIVGMFVNTLALRNEPAGGKTFRDFLAEVKINTLGAFEHQDYPLDELVDKLDMQRDLSRNPLFDTVFILQNMEQKPFEMEQLTITPYSAEVKQAKFDLSLEAYEENAEIIFSLDYSTKLFSRETIEKIATHFIQILRAVIAEPEMPLSEITMLTEAEKQRLLVDFNGAHKDFPQNKTLQALFEEQAEKSPQATAVEISGQPLSYQELNERANQLAATLRERGVQPDQPVGIMANRSVEMVVGILAILKAGGAYVPIDPEYPEERVAYMLTDCQARLVLTQKHLGAKLGSSVTAECLYLDDESNYGVHRSNLQPINTASDLAYIIYTSGTTGKPKGVMVEHRGIVNNVLWKKAEYQMKVGDRSLLSLSFAFDAFVLSFFTPVLSGATVVLAEDEEAKDPVSLKKLIAASRCTLMTGVPSLFQAILECSTPADIRPLQTVTLGGEKITAQLVEKCKQLNPDLVIVNEYGPTESSVVATWQRLAGPDAAITIGRPIANTSLYIVNQYHQLQPIGVVGEICIGGRGLARGYWNKPALTEEKFVSHPFAAGERMYKTGDLGKWLPDGTIEYIGRIDEQVKVRGYRIEIGEIESALLAAEKLTAAVVVVYEDQLGQSALAAYFTADEQLDVTKLWSHLSKRLPSYMIPAHFVQLDQLPLTPNGKVDKKALPKPEGKPVTEAQYVAPTNAVESKLAEIWERVLGVSGIGILDNFFQIGGHSLKAMAVAAQVHREYQVELPLKVLFAQPTIKALAQYVATSGKETYVPIEPAPLQEYYPVSSAQKRMYVLRQFADTGTVYNMPSALYIEGDLDRKRFEAAIHGLVERHESLRTSFHTVNGEPVQRVHEHVELNVQYAEVTEAQVEPTVESFVQAFDLTKAPLLRVGLFKLAAKRHLFLLDMHHIISDGVSAGIIMEEFSKLYRGEELPALSVHYKDFAVWQSELFQSDVYTEHENYWLNAFSGDIPVLNLPADFSRPLTQSFEGDCVSFQADKALLDDLHKLAQESQSTLFMVLLAAYNVLLAKYSGQEDIVVGTPIAGRSHADIENVLGMFVNTLALRNYPVETKHFQAFLEEVKQNTLQAYAHQDYPFEALVEKLDIQRDLSRNPLFDTMFILQNLDQKAYELDGLKLEAYPAQAGNAKFDLTLEAHEDETGIHFALVYSTKLFQRESIERMAGHFLQVLRQVVADQATALREISLLSEEERRIVTVDFNNTFAAYPRDLTIQELFEQQAAKTPEHAAVVMDGQMLTYRELNEKANQLAHVLRQNGVGKESIVGLLADRSLEMITGIMGILKAGGAYLGLDPEHPSERLAYMLEDGGVKVVLVQKHLLPLVGEGLMPIVLEEESLRPEDCGNPAIVNGASDLAYVMYTSGSTGKPKGVMVEHRNVTRLVMHTNYVQVRESDRMIQTGAIGFDAMTFEIFGALLHGASLYLVSKDVLLDAEKLGDFLRTNQITTMWLTSPLFNQLSQDNPAMFDSLRALIVGGEALSPKHINRVKSALPDLEIWNGYGPTENTTFSTCYLIEQHFEEQIPIGKPIANSTAYIVDGNNQPQPIGVPGELCVGGDGVARGYVNKPELTAEKFVPNPFAPGETMYRTGDLARWLPDGTIEYLGRIDQQVKIRGYRIELGEIETVLSQQAQVKEAVVAVIEEANGQKALCAYFVPEQAVDAAELREAMSKQLPGYMVPAYYVQMEKLPLTANGKVDRRALPQPSGERTTGSAFVAAQNDTEAKLQQIWQEVLGIPAIGIHDNFFEIGGHSLKAMNVITQVHKTFQVELPLKALFATPTIHELAAHIAESAFEQFETIQPVEPAAFYPVSFAQKRMYILHQFEGSGISYNVPSVLVLEGKLDYDRFAAAIQSLVKRHESLRTSFHSVNGEPLQRVHPDVELPVRLLEATEDQSESLIQELIQPFDLEIAPLFRVNLIKLGAERHLFFMDMHHIISDGVSLAVIVEEIASLYAGKQLSDLRIQYKDFAVWQTKLAQSDRFQKQEDFWTRTFAGEIPLLNLPHDYPRPSVQSFDGDTVALGTGHHLLEQLRKLAAETGTTLFMVLLAAYHVLLSKYAGQEEIVVGTPIAGRSHADVERIVGMFVNTLALKNTAAGSLSFRAFLEDVKQNALHAFEHQDYPFEHLVEKLQVRRDLSRNPLFDTMFSLGLAESAEGEVADLKVSPYPVNGHIAKFDLSLDAMEKQDGLLVQFSYCTKLFAKETVDRLAAHYVQLLQTITADPDIELARISVLSKAETEHMLHSFLATKTAYPTDKTFQKLFEEQVEKTPNEIAVLFGNEQLTYQELNAKANQLARVLRRKGVKPESTVGILVDRSLYMVIGMLAVLKAGGTFVPIDPDYPLERQAFMLEDSEAKLLLTLQKMNSQVAFPYETFYLDTETVDQEETGNLEHVAQPENVAYIIYTSGTTGKPKGVVIEHRSYANVAFAWKDEYHLDSFPVRLLQMASFAFDVSTGDFARALLTGGQLVICPNGVKMDPASLYETIRRHEITIFEATPALIMPLMHYVYENELDMSQMKLLILGADSCPAEDFKTLLARFGQKMRIINSYGVTEACIDTSYYEETDVTAIRSGTVPIGKPLPNMTMYVVDAHLNLQPVGVVGELCIGGAGVARGYLNRPELTEEKFVPNPFAPGERLYRTGDLAKWRADGNVEFLGRNDHQVKIRGVRIELGEIETQLRKLDGITEAVVVAREDRGQEKELCAYVVADHKLDTAELRANLLKELPQAMIPAYFVTLDALPLTANGKVDRRSLPAPDVTMLRTTEYVAPRSVWEARLAQVWEQVLNVPQVGALDDFFALGGHSLRAMRVLSSMHNEYQVDIPLRILFEKPTIQELAAFIEETAKGNVFSIEPVQKQAYYPVSSAQKRMYILDQFEGVGISYNMPSTMLIEGKLERTRVEAAFQRLIARHESLRTSFAVVNGEPVQNIHEDVPFALAYSEVTEQEARELVSSLVQPFDLEVAPLIRVSLLKIGEDRYVLFTDMHHSISDGVSSGILLAEWVQLYQGDVLPELRIQYKDFAVWQQEFSQSAAFHKQEAYWLQTFADDIPVLNLPTDFTRPSTQSFAGDQCTIGAGKALTEGLHQLAQATGTTLYMVLLAAYNVLLAKYAGQEDIIVGTPITGRSHADLEPIVGMFVNTLAMRNKPQREKTFSEFLQEVKQNALDAYGHQDYPFEELVEKLAIARDLSRNPLFDTVFTFQNSTEEVMTLPECTLAPFMTDETGQHAKFDLTFSATEEREEMTIGVEYSTSLFTRETMERFSRHFLTIAASIVQNPHIRLGEIDMLLPEEKQQILAGFNDTAVSYALDKTLHQLFEEQVDKTPDQAALLFSEQSLTYSELNERANRLARVLRAKGVGPDRLVAIMAERSPEMVIGILGILKAGGAYVPVDPGYPQERIQYLLEDSNAALLLSQAHLLPLLAQVSSELPECLDLNAELDAGLSGSNLPAVNQPTDLAYVIYTSGTTGKPKGVMIPHQGIVNCLQWRRDEYGFGPSDKALQVFSFAFDGFVASLFAPLLGGATCVLPQEAAAKDPVALKKLMAATEVTHYYGVPSLFQAILDCSTTTDFNQLRCVTLGGEKLPVQLVQKTKEKHPAIEINNEYGPTENSVVTTISRSIEAGQAITIGRPLANVQVYIVDEQHHLQPIGVVGELCIGGAGLARGYLNKPELTAEKFVANPFRPGERMYKTGDLVKWRTDGTIEYIGRADEQVKVRGYRIEIGEIESAVLAYQGIDQAVVVARDDDATAGSYLCAYFVAATAVSVSGLRSHLAKELPAYMIPSYFVELDQLPLSANGKVDRKALPKPQQSDATTREYVAPRNATEQQLAAIWQEVLGVEPIGITDQFFELGGHSLKATLLIAKVYEYMQIELPLNLIFQYPTIEKVADFITHKRFESRYGTAILLNQETARNVFCFTPIGAQSVYYQKLAAEIQGVSLYSFDFIQDDNRMEQYIAAITAIDPSGPYTLMGYSSGGNLAFEVAKELEERGYGVTDIILFDSYWKDKAIERTVAETENDIAQLFAEIGENTEMFNMTQEDFQLYAANEFVKQSFVRKTVSYVMFHNNLVNTGMTTAAIHLIQSELEADEEAPVAAKWNESAWANATQRLLTYSGHGIHSRMLAGDYASQNASILQNILQELFILK</sequence>
<name>TYCC_BREPA</name>
<feature type="chain" id="PRO_0000193095" description="Tyrocidine synthase 3">
    <location>
        <begin position="1"/>
        <end position="6486"/>
    </location>
</feature>
<feature type="domain" description="Carrier 1" evidence="2">
    <location>
        <begin position="965"/>
        <end position="1040"/>
    </location>
</feature>
<feature type="domain" description="Carrier 2" evidence="2">
    <location>
        <begin position="2002"/>
        <end position="2077"/>
    </location>
</feature>
<feature type="domain" description="Carrier 3" evidence="2">
    <location>
        <begin position="3040"/>
        <end position="3115"/>
    </location>
</feature>
<feature type="domain" description="Carrier 4" evidence="2">
    <location>
        <begin position="4075"/>
        <end position="4150"/>
    </location>
</feature>
<feature type="domain" description="Carrier 5" evidence="2">
    <location>
        <begin position="5119"/>
        <end position="5194"/>
    </location>
</feature>
<feature type="domain" description="Carrier 6" evidence="2">
    <location>
        <begin position="6162"/>
        <end position="6237"/>
    </location>
</feature>
<feature type="region of interest" description="Domain 1 (asparagine-activating)">
    <location>
        <begin position="466"/>
        <end position="1038"/>
    </location>
</feature>
<feature type="region of interest" description="Domain 2 (glutamine-activating)">
    <location>
        <begin position="1521"/>
        <end position="2070"/>
    </location>
</feature>
<feature type="region of interest" description="Domain 3 (tyrosine-activating)">
    <location>
        <begin position="2536"/>
        <end position="3113"/>
    </location>
</feature>
<feature type="region of interest" description="Domain 4 (valine-activating)">
    <location>
        <begin position="3590"/>
        <end position="4149"/>
    </location>
</feature>
<feature type="region of interest" description="Domain 5 (ornithine-activating)">
    <location>
        <begin position="4606"/>
        <end position="5203"/>
    </location>
</feature>
<feature type="region of interest" description="Domain 6 (leucine-activating)">
    <location>
        <begin position="5658"/>
        <end position="6245"/>
    </location>
</feature>
<feature type="modified residue" description="O-(pantetheine 4'-phosphoryl)serine" evidence="2">
    <location>
        <position position="1000"/>
    </location>
</feature>
<feature type="modified residue" description="O-(pantetheine 4'-phosphoryl)serine" evidence="2">
    <location>
        <position position="2037"/>
    </location>
</feature>
<feature type="modified residue" description="O-(pantetheine 4'-phosphoryl)serine" evidence="2 3">
    <location>
        <position position="3075"/>
    </location>
</feature>
<feature type="modified residue" description="O-(pantetheine 4'-phosphoryl)serine" evidence="2">
    <location>
        <position position="4110"/>
    </location>
</feature>
<feature type="modified residue" description="O-(pantetheine 4'-phosphoryl)serine" evidence="2">
    <location>
        <position position="5154"/>
    </location>
</feature>
<feature type="modified residue" description="O-(pantetheine 4'-phosphoryl)serine" evidence="2">
    <location>
        <position position="6197"/>
    </location>
</feature>
<feature type="helix" evidence="7">
    <location>
        <begin position="3044"/>
        <end position="3057"/>
    </location>
</feature>
<feature type="turn" evidence="5">
    <location>
        <begin position="3064"/>
        <end position="3067"/>
    </location>
</feature>
<feature type="turn" evidence="7">
    <location>
        <begin position="3068"/>
        <end position="3072"/>
    </location>
</feature>
<feature type="helix" evidence="7">
    <location>
        <begin position="3075"/>
        <end position="3089"/>
    </location>
</feature>
<feature type="helix" evidence="7">
    <location>
        <begin position="3095"/>
        <end position="3100"/>
    </location>
</feature>
<feature type="helix" evidence="7">
    <location>
        <begin position="3104"/>
        <end position="3112"/>
    </location>
</feature>
<feature type="helix" evidence="6">
    <location>
        <begin position="5123"/>
        <end position="5136"/>
    </location>
</feature>
<feature type="turn" evidence="6">
    <location>
        <begin position="5147"/>
        <end position="5151"/>
    </location>
</feature>
<feature type="helix" evidence="6">
    <location>
        <begin position="5154"/>
        <end position="5168"/>
    </location>
</feature>
<feature type="helix" evidence="6">
    <location>
        <begin position="5174"/>
        <end position="5179"/>
    </location>
</feature>
<feature type="helix" evidence="6">
    <location>
        <begin position="5183"/>
        <end position="5192"/>
    </location>
</feature>
<feature type="strand" evidence="6">
    <location>
        <begin position="5208"/>
        <end position="5211"/>
    </location>
</feature>
<feature type="helix" evidence="6">
    <location>
        <begin position="5214"/>
        <end position="5225"/>
    </location>
</feature>
<feature type="turn" evidence="6">
    <location>
        <begin position="5229"/>
        <end position="5232"/>
    </location>
</feature>
<feature type="strand" evidence="6">
    <location>
        <begin position="5236"/>
        <end position="5242"/>
    </location>
</feature>
<feature type="helix" evidence="6">
    <location>
        <begin position="5246"/>
        <end position="5259"/>
    </location>
</feature>
<feature type="helix" evidence="6">
    <location>
        <begin position="5261"/>
        <end position="5264"/>
    </location>
</feature>
<feature type="strand" evidence="6">
    <location>
        <begin position="5265"/>
        <end position="5270"/>
    </location>
</feature>
<feature type="strand" evidence="6">
    <location>
        <begin position="5273"/>
        <end position="5278"/>
    </location>
</feature>
<feature type="strand" evidence="6">
    <location>
        <begin position="5287"/>
        <end position="5290"/>
    </location>
</feature>
<feature type="helix" evidence="6">
    <location>
        <begin position="5293"/>
        <end position="5302"/>
    </location>
</feature>
<feature type="strand" evidence="6">
    <location>
        <begin position="5315"/>
        <end position="5323"/>
    </location>
</feature>
<feature type="strand" evidence="6">
    <location>
        <begin position="5326"/>
        <end position="5334"/>
    </location>
</feature>
<feature type="helix" evidence="6">
    <location>
        <begin position="5335"/>
        <end position="5337"/>
    </location>
</feature>
<feature type="helix" evidence="6">
    <location>
        <begin position="5340"/>
        <end position="5354"/>
    </location>
</feature>
<feature type="helix" evidence="6">
    <location>
        <begin position="5366"/>
        <end position="5376"/>
    </location>
</feature>
<feature type="helix" evidence="6">
    <location>
        <begin position="5380"/>
        <end position="5392"/>
    </location>
</feature>
<feature type="strand" evidence="6">
    <location>
        <begin position="5415"/>
        <end position="5422"/>
    </location>
</feature>
<feature type="helix" evidence="6">
    <location>
        <begin position="5425"/>
        <end position="5438"/>
    </location>
</feature>
<feature type="helix" evidence="6">
    <location>
        <begin position="5442"/>
        <end position="5458"/>
    </location>
</feature>
<feature type="strand" evidence="6">
    <location>
        <begin position="5463"/>
        <end position="5469"/>
    </location>
</feature>
<feature type="helix" evidence="6">
    <location>
        <begin position="5475"/>
        <end position="5477"/>
    </location>
</feature>
<feature type="strand" evidence="6">
    <location>
        <begin position="5486"/>
        <end position="5492"/>
    </location>
</feature>
<feature type="helix" evidence="6">
    <location>
        <begin position="5500"/>
        <end position="5516"/>
    </location>
</feature>
<feature type="helix" evidence="6">
    <location>
        <begin position="5522"/>
        <end position="5528"/>
    </location>
</feature>
<feature type="strand" evidence="6">
    <location>
        <begin position="5542"/>
        <end position="5548"/>
    </location>
</feature>
<feature type="strand" evidence="6">
    <location>
        <begin position="5558"/>
        <end position="5564"/>
    </location>
</feature>
<feature type="strand" evidence="6">
    <location>
        <begin position="5575"/>
        <end position="5584"/>
    </location>
</feature>
<feature type="strand" evidence="6">
    <location>
        <begin position="5589"/>
        <end position="5596"/>
    </location>
</feature>
<feature type="turn" evidence="6">
    <location>
        <begin position="5597"/>
        <end position="5599"/>
    </location>
</feature>
<feature type="helix" evidence="6">
    <location>
        <begin position="5602"/>
        <end position="5621"/>
    </location>
</feature>
<feature type="helix" evidence="6">
    <location>
        <begin position="5627"/>
        <end position="5629"/>
    </location>
</feature>
<gene>
    <name type="primary">tycC</name>
</gene>
<protein>
    <recommendedName>
        <fullName>Tyrocidine synthase 3</fullName>
    </recommendedName>
    <alternativeName>
        <fullName>Tyrocidine synthase III</fullName>
    </alternativeName>
    <domain>
        <recommendedName>
            <fullName>ATP-dependent asparagine adenylase</fullName>
            <shortName>AsnA</shortName>
        </recommendedName>
        <alternativeName>
            <fullName>Asparagine activase</fullName>
        </alternativeName>
    </domain>
    <domain>
        <recommendedName>
            <fullName>ATP-dependent glutamine adenylase</fullName>
            <shortName>GlnA</shortName>
        </recommendedName>
        <alternativeName>
            <fullName>Glutamine activase</fullName>
        </alternativeName>
    </domain>
    <domain>
        <recommendedName>
            <fullName>ATP-dependent tyrosine adenylase</fullName>
            <shortName>TyrA</shortName>
        </recommendedName>
        <alternativeName>
            <fullName>Tyrosine activase</fullName>
        </alternativeName>
    </domain>
    <domain>
        <recommendedName>
            <fullName>ATP-dependent valine adenylase</fullName>
            <shortName>ValA</shortName>
        </recommendedName>
        <alternativeName>
            <fullName>Valine activase</fullName>
        </alternativeName>
    </domain>
    <domain>
        <recommendedName>
            <fullName>ATP-dependent ornithine adenylase</fullName>
            <shortName>OrnA</shortName>
        </recommendedName>
        <alternativeName>
            <fullName>Ornithine activase</fullName>
        </alternativeName>
    </domain>
    <domain>
        <recommendedName>
            <fullName>ATP-dependent leucine adenylase</fullName>
            <shortName>LeuA</shortName>
        </recommendedName>
        <alternativeName>
            <fullName>Leucine activase</fullName>
        </alternativeName>
    </domain>
</protein>
<accession>O30409</accession>
<organism>
    <name type="scientific">Brevibacillus parabrevis</name>
    <dbReference type="NCBI Taxonomy" id="54914"/>
    <lineage>
        <taxon>Bacteria</taxon>
        <taxon>Bacillati</taxon>
        <taxon>Bacillota</taxon>
        <taxon>Bacilli</taxon>
        <taxon>Bacillales</taxon>
        <taxon>Paenibacillaceae</taxon>
        <taxon>Brevibacillus</taxon>
    </lineage>
</organism>
<dbReference type="EMBL" id="AF004835">
    <property type="protein sequence ID" value="AAC45930.1"/>
    <property type="molecule type" value="Genomic_DNA"/>
</dbReference>
<dbReference type="PDB" id="1DNY">
    <property type="method" value="NMR"/>
    <property type="chains" value="A=3032-3113"/>
</dbReference>
<dbReference type="PDB" id="2GDW">
    <property type="method" value="NMR"/>
    <property type="chains" value="A=3032-3113"/>
</dbReference>
<dbReference type="PDB" id="2GDX">
    <property type="method" value="NMR"/>
    <property type="chains" value="A=3032-3113"/>
</dbReference>
<dbReference type="PDB" id="2GDY">
    <property type="method" value="NMR"/>
    <property type="chains" value="A=3032-3113"/>
</dbReference>
<dbReference type="PDB" id="2JGP">
    <property type="method" value="X-ray"/>
    <property type="resolution" value="1.85 A"/>
    <property type="chains" value="A=5116-5633"/>
</dbReference>
<dbReference type="PDB" id="2K2Q">
    <property type="method" value="NMR"/>
    <property type="chains" value="A=3033-3112"/>
</dbReference>
<dbReference type="PDB" id="2MD9">
    <property type="method" value="NMR"/>
    <property type="chains" value="A=3032-3113"/>
</dbReference>
<dbReference type="PDB" id="4MRT">
    <property type="method" value="X-ray"/>
    <property type="resolution" value="2.00 A"/>
    <property type="chains" value="C=3038-3113"/>
</dbReference>
<dbReference type="PDBsum" id="1DNY"/>
<dbReference type="PDBsum" id="2GDW"/>
<dbReference type="PDBsum" id="2GDX"/>
<dbReference type="PDBsum" id="2GDY"/>
<dbReference type="PDBsum" id="2JGP"/>
<dbReference type="PDBsum" id="2K2Q"/>
<dbReference type="PDBsum" id="2MD9"/>
<dbReference type="PDBsum" id="4MRT"/>
<dbReference type="BMRB" id="O30409"/>
<dbReference type="SMR" id="O30409"/>
<dbReference type="DIP" id="DIP-29492N"/>
<dbReference type="IntAct" id="O30409">
    <property type="interactions" value="1"/>
</dbReference>
<dbReference type="STRING" id="54914.AV540_22700"/>
<dbReference type="ESTHER" id="bacbr-tycc">
    <property type="family name" value="Thioesterase"/>
</dbReference>
<dbReference type="KEGG" id="ag:AAC45930"/>
<dbReference type="SABIO-RK" id="O30409"/>
<dbReference type="UniPathway" id="UPA00180"/>
<dbReference type="EvolutionaryTrace" id="O30409"/>
<dbReference type="GO" id="GO:0005829">
    <property type="term" value="C:cytosol"/>
    <property type="evidence" value="ECO:0007669"/>
    <property type="project" value="TreeGrafter"/>
</dbReference>
<dbReference type="GO" id="GO:0016874">
    <property type="term" value="F:ligase activity"/>
    <property type="evidence" value="ECO:0007669"/>
    <property type="project" value="UniProtKB-KW"/>
</dbReference>
<dbReference type="GO" id="GO:0031177">
    <property type="term" value="F:phosphopantetheine binding"/>
    <property type="evidence" value="ECO:0007669"/>
    <property type="project" value="InterPro"/>
</dbReference>
<dbReference type="GO" id="GO:0043041">
    <property type="term" value="P:amino acid activation for nonribosomal peptide biosynthetic process"/>
    <property type="evidence" value="ECO:0007669"/>
    <property type="project" value="TreeGrafter"/>
</dbReference>
<dbReference type="GO" id="GO:0017000">
    <property type="term" value="P:antibiotic biosynthetic process"/>
    <property type="evidence" value="ECO:0007669"/>
    <property type="project" value="UniProtKB-KW"/>
</dbReference>
<dbReference type="GO" id="GO:0008610">
    <property type="term" value="P:lipid biosynthetic process"/>
    <property type="evidence" value="ECO:0007669"/>
    <property type="project" value="UniProtKB-ARBA"/>
</dbReference>
<dbReference type="GO" id="GO:0044550">
    <property type="term" value="P:secondary metabolite biosynthetic process"/>
    <property type="evidence" value="ECO:0007669"/>
    <property type="project" value="TreeGrafter"/>
</dbReference>
<dbReference type="CDD" id="cd05930">
    <property type="entry name" value="A_NRPS"/>
    <property type="match status" value="3"/>
</dbReference>
<dbReference type="CDD" id="cd17655">
    <property type="entry name" value="A_NRPS_Bac"/>
    <property type="match status" value="1"/>
</dbReference>
<dbReference type="CDD" id="cd17650">
    <property type="entry name" value="A_NRPS_PpsD_like"/>
    <property type="match status" value="1"/>
</dbReference>
<dbReference type="CDD" id="cd12117">
    <property type="entry name" value="A_NRPS_Srf_like"/>
    <property type="match status" value="1"/>
</dbReference>
<dbReference type="CDD" id="cd19543">
    <property type="entry name" value="DCL_NRPS"/>
    <property type="match status" value="1"/>
</dbReference>
<dbReference type="CDD" id="cd19531">
    <property type="entry name" value="LCL_NRPS-like"/>
    <property type="match status" value="5"/>
</dbReference>
<dbReference type="FunFam" id="3.30.300.30:FF:000010">
    <property type="entry name" value="Enterobactin synthetase component F"/>
    <property type="match status" value="6"/>
</dbReference>
<dbReference type="FunFam" id="3.40.50.980:FF:000002">
    <property type="entry name" value="Enterobactin synthetase component F"/>
    <property type="match status" value="1"/>
</dbReference>
<dbReference type="FunFam" id="3.30.559.30:FF:000001">
    <property type="entry name" value="Non-ribosomal peptide synthetase"/>
    <property type="match status" value="5"/>
</dbReference>
<dbReference type="FunFam" id="3.40.50.12780:FF:000012">
    <property type="entry name" value="Non-ribosomal peptide synthetase"/>
    <property type="match status" value="6"/>
</dbReference>
<dbReference type="FunFam" id="3.40.50.980:FF:000001">
    <property type="entry name" value="Non-ribosomal peptide synthetase"/>
    <property type="match status" value="6"/>
</dbReference>
<dbReference type="FunFam" id="2.30.38.10:FF:000001">
    <property type="entry name" value="Non-ribosomal peptide synthetase PvdI"/>
    <property type="match status" value="6"/>
</dbReference>
<dbReference type="FunFam" id="1.10.1200.10:FF:000005">
    <property type="entry name" value="Nonribosomal peptide synthetase 1"/>
    <property type="match status" value="6"/>
</dbReference>
<dbReference type="Gene3D" id="3.30.300.30">
    <property type="match status" value="6"/>
</dbReference>
<dbReference type="Gene3D" id="3.40.50.980">
    <property type="match status" value="12"/>
</dbReference>
<dbReference type="Gene3D" id="1.10.1200.10">
    <property type="entry name" value="ACP-like"/>
    <property type="match status" value="6"/>
</dbReference>
<dbReference type="Gene3D" id="3.40.50.1820">
    <property type="entry name" value="alpha/beta hydrolase"/>
    <property type="match status" value="1"/>
</dbReference>
<dbReference type="Gene3D" id="3.30.559.10">
    <property type="entry name" value="Chloramphenicol acetyltransferase-like domain"/>
    <property type="match status" value="6"/>
</dbReference>
<dbReference type="Gene3D" id="1.10.287.490">
    <property type="entry name" value="Helix hairpin bin"/>
    <property type="match status" value="1"/>
</dbReference>
<dbReference type="Gene3D" id="2.30.38.10">
    <property type="entry name" value="Luciferase, Domain 3"/>
    <property type="match status" value="6"/>
</dbReference>
<dbReference type="Gene3D" id="3.30.559.30">
    <property type="entry name" value="Nonribosomal peptide synthetase, condensation domain"/>
    <property type="match status" value="6"/>
</dbReference>
<dbReference type="InterPro" id="IPR010071">
    <property type="entry name" value="AA_adenyl_dom"/>
</dbReference>
<dbReference type="InterPro" id="IPR029058">
    <property type="entry name" value="AB_hydrolase_fold"/>
</dbReference>
<dbReference type="InterPro" id="IPR036736">
    <property type="entry name" value="ACP-like_sf"/>
</dbReference>
<dbReference type="InterPro" id="IPR025110">
    <property type="entry name" value="AMP-bd_C"/>
</dbReference>
<dbReference type="InterPro" id="IPR045851">
    <property type="entry name" value="AMP-bd_C_sf"/>
</dbReference>
<dbReference type="InterPro" id="IPR020845">
    <property type="entry name" value="AMP-binding_CS"/>
</dbReference>
<dbReference type="InterPro" id="IPR000873">
    <property type="entry name" value="AMP-dep_synth/lig_dom"/>
</dbReference>
<dbReference type="InterPro" id="IPR023213">
    <property type="entry name" value="CAT-like_dom_sf"/>
</dbReference>
<dbReference type="InterPro" id="IPR001242">
    <property type="entry name" value="Condensatn"/>
</dbReference>
<dbReference type="InterPro" id="IPR020806">
    <property type="entry name" value="PKS_PP-bd"/>
</dbReference>
<dbReference type="InterPro" id="IPR009081">
    <property type="entry name" value="PP-bd_ACP"/>
</dbReference>
<dbReference type="InterPro" id="IPR006162">
    <property type="entry name" value="Ppantetheine_attach_site"/>
</dbReference>
<dbReference type="InterPro" id="IPR001031">
    <property type="entry name" value="Thioesterase"/>
</dbReference>
<dbReference type="NCBIfam" id="TIGR01733">
    <property type="entry name" value="AA-adenyl-dom"/>
    <property type="match status" value="6"/>
</dbReference>
<dbReference type="NCBIfam" id="NF003417">
    <property type="entry name" value="PRK04813.1"/>
    <property type="match status" value="6"/>
</dbReference>
<dbReference type="NCBIfam" id="NF004282">
    <property type="entry name" value="PRK05691.1"/>
    <property type="match status" value="7"/>
</dbReference>
<dbReference type="PANTHER" id="PTHR45527:SF1">
    <property type="entry name" value="FATTY ACID SYNTHASE"/>
    <property type="match status" value="1"/>
</dbReference>
<dbReference type="PANTHER" id="PTHR45527">
    <property type="entry name" value="NONRIBOSOMAL PEPTIDE SYNTHETASE"/>
    <property type="match status" value="1"/>
</dbReference>
<dbReference type="Pfam" id="PF00501">
    <property type="entry name" value="AMP-binding"/>
    <property type="match status" value="6"/>
</dbReference>
<dbReference type="Pfam" id="PF13193">
    <property type="entry name" value="AMP-binding_C"/>
    <property type="match status" value="6"/>
</dbReference>
<dbReference type="Pfam" id="PF00668">
    <property type="entry name" value="Condensation"/>
    <property type="match status" value="6"/>
</dbReference>
<dbReference type="Pfam" id="PF00550">
    <property type="entry name" value="PP-binding"/>
    <property type="match status" value="6"/>
</dbReference>
<dbReference type="Pfam" id="PF00975">
    <property type="entry name" value="Thioesterase"/>
    <property type="match status" value="1"/>
</dbReference>
<dbReference type="SMART" id="SM00823">
    <property type="entry name" value="PKS_PP"/>
    <property type="match status" value="6"/>
</dbReference>
<dbReference type="SMART" id="SM01294">
    <property type="entry name" value="PKS_PP_betabranch"/>
    <property type="match status" value="1"/>
</dbReference>
<dbReference type="SUPFAM" id="SSF56801">
    <property type="entry name" value="Acetyl-CoA synthetase-like"/>
    <property type="match status" value="6"/>
</dbReference>
<dbReference type="SUPFAM" id="SSF47336">
    <property type="entry name" value="ACP-like"/>
    <property type="match status" value="6"/>
</dbReference>
<dbReference type="SUPFAM" id="SSF53474">
    <property type="entry name" value="alpha/beta-Hydrolases"/>
    <property type="match status" value="1"/>
</dbReference>
<dbReference type="SUPFAM" id="SSF52777">
    <property type="entry name" value="CoA-dependent acyltransferases"/>
    <property type="match status" value="12"/>
</dbReference>
<dbReference type="PROSITE" id="PS00455">
    <property type="entry name" value="AMP_BINDING"/>
    <property type="match status" value="6"/>
</dbReference>
<dbReference type="PROSITE" id="PS50075">
    <property type="entry name" value="CARRIER"/>
    <property type="match status" value="6"/>
</dbReference>
<dbReference type="PROSITE" id="PS00012">
    <property type="entry name" value="PHOSPHOPANTETHEINE"/>
    <property type="match status" value="6"/>
</dbReference>
<evidence type="ECO:0000250" key="1"/>
<evidence type="ECO:0000255" key="2">
    <source>
        <dbReference type="PROSITE-ProRule" id="PRU00258"/>
    </source>
</evidence>
<evidence type="ECO:0000269" key="3">
    <source>
    </source>
</evidence>
<evidence type="ECO:0000305" key="4"/>
<evidence type="ECO:0007829" key="5">
    <source>
        <dbReference type="PDB" id="2GDW"/>
    </source>
</evidence>
<evidence type="ECO:0007829" key="6">
    <source>
        <dbReference type="PDB" id="2JGP"/>
    </source>
</evidence>
<evidence type="ECO:0007829" key="7">
    <source>
        <dbReference type="PDB" id="4MRT"/>
    </source>
</evidence>